<proteinExistence type="predicted"/>
<organismHost>
    <name type="scientific">Saccharolobus islandicus</name>
    <name type="common">Sulfolobus islandicus</name>
    <dbReference type="NCBI Taxonomy" id="43080"/>
</organismHost>
<reference key="1">
    <citation type="journal article" date="2001" name="Virology">
        <title>Sequences and replication of genomes of the archaeal rudiviruses SIRV1 and SIRV2: relationships to the archaeal lipothrixvirus SIFV and some eukaryal viruses.</title>
        <authorList>
            <person name="Peng X."/>
            <person name="Blum H."/>
            <person name="She Q."/>
            <person name="Mallok S."/>
            <person name="Bruegger K."/>
            <person name="Garrett R.A."/>
            <person name="Zillig W."/>
            <person name="Prangishvili D."/>
        </authorList>
    </citation>
    <scope>NUCLEOTIDE SEQUENCE [LARGE SCALE GENOMIC DNA]</scope>
    <source>
        <strain>Isolate variant VIII</strain>
    </source>
</reference>
<reference key="2">
    <citation type="journal article" date="2004" name="Mol. Microbiol.">
        <title>Multiple variants of the archaeal DNA rudivirus SIRV1 in a single host and a novel mechanism of genomic variation.</title>
        <authorList>
            <person name="Peng X."/>
            <person name="Kessler A."/>
            <person name="Phan H."/>
            <person name="Garrett R.A."/>
            <person name="Prangishvili D."/>
        </authorList>
    </citation>
    <scope>NUCLEOTIDE SEQUENCE [LARGE SCALE GENOMIC DNA]</scope>
    <source>
        <strain>Isolate variant XX</strain>
    </source>
</reference>
<gene>
    <name type="ORF">105</name>
</gene>
<accession>Q8QL49</accession>
<accession>Q5TJB3</accession>
<dbReference type="EMBL" id="AJ414696">
    <property type="protein sequence ID" value="CAC93960.1"/>
    <property type="molecule type" value="Genomic_DNA"/>
</dbReference>
<dbReference type="EMBL" id="AJ748296">
    <property type="protein sequence ID" value="CAG38825.1"/>
    <property type="molecule type" value="Genomic_DNA"/>
</dbReference>
<dbReference type="RefSeq" id="NP_666593.1">
    <property type="nucleotide sequence ID" value="NC_004087.1"/>
</dbReference>
<dbReference type="KEGG" id="vg:951365"/>
<dbReference type="OrthoDB" id="25185at10239"/>
<dbReference type="Proteomes" id="UP000002270">
    <property type="component" value="Genome"/>
</dbReference>
<dbReference type="Proteomes" id="UP000223181">
    <property type="component" value="Segment"/>
</dbReference>
<keyword id="KW-1185">Reference proteome</keyword>
<organism>
    <name type="scientific">Sulfolobus islandicus rod-shaped virus 1</name>
    <name type="common">SIRV-1</name>
    <name type="synonym">Sulfolobus virus SIRV-1</name>
    <dbReference type="NCBI Taxonomy" id="157898"/>
    <lineage>
        <taxon>Viruses</taxon>
        <taxon>Adnaviria</taxon>
        <taxon>Zilligvirae</taxon>
        <taxon>Taleaviricota</taxon>
        <taxon>Tokiviricetes</taxon>
        <taxon>Ligamenvirales</taxon>
        <taxon>Rudiviridae</taxon>
        <taxon>Icerudivirus</taxon>
        <taxon>Icerudivirus SIRV1</taxon>
    </lineage>
</organism>
<sequence>MNYMIFNSLIVQKYILNNAKAVATIRKKGYYKLYQKIILKVGDKRFYGKVIAKAPVTEYCLSKYVKFSGFENVENWLNEAKRLHNDKIDFERYEIIVIWINDSFF</sequence>
<feature type="chain" id="PRO_0000342327" description="Uncharacterized protein 105">
    <location>
        <begin position="1"/>
        <end position="105"/>
    </location>
</feature>
<name>Y105_SIRV1</name>
<protein>
    <recommendedName>
        <fullName>Uncharacterized protein 105</fullName>
    </recommendedName>
</protein>